<feature type="chain" id="PRO_0000147292" description="Dihydroorotase">
    <location>
        <begin position="1"/>
        <end position="364"/>
    </location>
</feature>
<feature type="binding site" evidence="1">
    <location>
        <position position="14"/>
    </location>
    <ligand>
        <name>Zn(2+)</name>
        <dbReference type="ChEBI" id="CHEBI:29105"/>
        <label>1</label>
    </ligand>
</feature>
<feature type="binding site" evidence="1">
    <location>
        <position position="16"/>
    </location>
    <ligand>
        <name>Zn(2+)</name>
        <dbReference type="ChEBI" id="CHEBI:29105"/>
        <label>1</label>
    </ligand>
</feature>
<feature type="binding site" description="via carbamate group" evidence="1">
    <location>
        <position position="98"/>
    </location>
    <ligand>
        <name>Zn(2+)</name>
        <dbReference type="ChEBI" id="CHEBI:29105"/>
        <label>1</label>
    </ligand>
</feature>
<feature type="binding site" description="via carbamate group" evidence="1">
    <location>
        <position position="98"/>
    </location>
    <ligand>
        <name>Zn(2+)</name>
        <dbReference type="ChEBI" id="CHEBI:29105"/>
        <label>2</label>
    </ligand>
</feature>
<feature type="binding site" evidence="1">
    <location>
        <position position="137"/>
    </location>
    <ligand>
        <name>Zn(2+)</name>
        <dbReference type="ChEBI" id="CHEBI:29105"/>
        <label>2</label>
    </ligand>
</feature>
<feature type="binding site" evidence="1">
    <location>
        <position position="180"/>
    </location>
    <ligand>
        <name>Zn(2+)</name>
        <dbReference type="ChEBI" id="CHEBI:29105"/>
        <label>2</label>
    </ligand>
</feature>
<feature type="binding site" evidence="1">
    <location>
        <position position="258"/>
    </location>
    <ligand>
        <name>Zn(2+)</name>
        <dbReference type="ChEBI" id="CHEBI:29105"/>
        <label>1</label>
    </ligand>
</feature>
<feature type="modified residue" description="N6-carboxylysine" evidence="1">
    <location>
        <position position="98"/>
    </location>
</feature>
<feature type="sequence conflict" description="In Ref. 1." evidence="3" ref="1">
    <original>NSAAGVDPNDFSA</original>
    <variation>IRLLGWIQMTSAH</variation>
    <location>
        <begin position="107"/>
        <end position="119"/>
    </location>
</feature>
<feature type="sequence conflict" description="In Ref. 1; CAA30444." evidence="3" ref="1">
    <original>A</original>
    <variation>R</variation>
    <location>
        <position position="156"/>
    </location>
</feature>
<feature type="sequence conflict" description="In Ref. 1; CAA30444." evidence="3" ref="1">
    <original>K</original>
    <variation>R</variation>
    <location>
        <position position="240"/>
    </location>
</feature>
<feature type="sequence conflict" description="In Ref. 1; CAA30444." evidence="3" ref="1">
    <original>N</original>
    <variation>K</variation>
    <location>
        <position position="269"/>
    </location>
</feature>
<feature type="sequence conflict" description="In Ref. 1; CAA30444." evidence="3" ref="1">
    <original>V</original>
    <variation>M</variation>
    <location>
        <position position="319"/>
    </location>
</feature>
<feature type="strand" evidence="5">
    <location>
        <begin position="4"/>
        <end position="9"/>
    </location>
</feature>
<feature type="strand" evidence="5">
    <location>
        <begin position="11"/>
        <end position="15"/>
    </location>
</feature>
<feature type="helix" evidence="5">
    <location>
        <begin position="20"/>
        <end position="26"/>
    </location>
</feature>
<feature type="helix" evidence="5">
    <location>
        <begin position="29"/>
        <end position="32"/>
    </location>
</feature>
<feature type="strand" evidence="5">
    <location>
        <begin position="36"/>
        <end position="40"/>
    </location>
</feature>
<feature type="strand" evidence="6">
    <location>
        <begin position="44"/>
        <end position="46"/>
    </location>
</feature>
<feature type="helix" evidence="5">
    <location>
        <begin position="51"/>
        <end position="64"/>
    </location>
</feature>
<feature type="strand" evidence="5">
    <location>
        <begin position="68"/>
        <end position="71"/>
    </location>
</feature>
<feature type="strand" evidence="5">
    <location>
        <begin position="73"/>
        <end position="75"/>
    </location>
</feature>
<feature type="helix" evidence="5">
    <location>
        <begin position="82"/>
        <end position="90"/>
    </location>
</feature>
<feature type="strand" evidence="5">
    <location>
        <begin position="95"/>
        <end position="99"/>
    </location>
</feature>
<feature type="helix" evidence="5">
    <location>
        <begin position="117"/>
        <end position="120"/>
    </location>
</feature>
<feature type="helix" evidence="5">
    <location>
        <begin position="121"/>
        <end position="129"/>
    </location>
</feature>
<feature type="strand" evidence="5">
    <location>
        <begin position="133"/>
        <end position="136"/>
    </location>
</feature>
<feature type="strand" evidence="7">
    <location>
        <begin position="146"/>
        <end position="149"/>
    </location>
</feature>
<feature type="turn" evidence="5">
    <location>
        <begin position="153"/>
        <end position="155"/>
    </location>
</feature>
<feature type="helix" evidence="5">
    <location>
        <begin position="156"/>
        <end position="170"/>
    </location>
</feature>
<feature type="strand" evidence="5">
    <location>
        <begin position="174"/>
        <end position="178"/>
    </location>
</feature>
<feature type="helix" evidence="5">
    <location>
        <begin position="184"/>
        <end position="193"/>
    </location>
</feature>
<feature type="turn" evidence="5">
    <location>
        <begin position="194"/>
        <end position="196"/>
    </location>
</feature>
<feature type="helix" evidence="5">
    <location>
        <begin position="200"/>
        <end position="202"/>
    </location>
</feature>
<feature type="strand" evidence="5">
    <location>
        <begin position="205"/>
        <end position="209"/>
    </location>
</feature>
<feature type="helix" evidence="5">
    <location>
        <begin position="212"/>
        <end position="214"/>
    </location>
</feature>
<feature type="helix" evidence="5">
    <location>
        <begin position="218"/>
        <end position="221"/>
    </location>
</feature>
<feature type="helix" evidence="5">
    <location>
        <begin position="225"/>
        <end position="227"/>
    </location>
</feature>
<feature type="helix" evidence="5">
    <location>
        <begin position="236"/>
        <end position="246"/>
    </location>
</feature>
<feature type="strand" evidence="5">
    <location>
        <begin position="253"/>
        <end position="255"/>
    </location>
</feature>
<feature type="helix" evidence="5">
    <location>
        <begin position="264"/>
        <end position="266"/>
    </location>
</feature>
<feature type="strand" evidence="5">
    <location>
        <begin position="270"/>
        <end position="272"/>
    </location>
</feature>
<feature type="helix" evidence="5">
    <location>
        <begin position="280"/>
        <end position="282"/>
    </location>
</feature>
<feature type="helix" evidence="5">
    <location>
        <begin position="283"/>
        <end position="293"/>
    </location>
</feature>
<feature type="helix" evidence="5">
    <location>
        <begin position="297"/>
        <end position="299"/>
    </location>
</feature>
<feature type="helix" evidence="5">
    <location>
        <begin position="300"/>
        <end position="304"/>
    </location>
</feature>
<feature type="helix" evidence="5">
    <location>
        <begin position="306"/>
        <end position="312"/>
    </location>
</feature>
<feature type="helix" evidence="5">
    <location>
        <begin position="316"/>
        <end position="318"/>
    </location>
</feature>
<feature type="strand" evidence="5">
    <location>
        <begin position="324"/>
        <end position="328"/>
    </location>
</feature>
<feature type="strand" evidence="5">
    <location>
        <begin position="341"/>
        <end position="343"/>
    </location>
</feature>
<feature type="turn" evidence="5">
    <location>
        <begin position="349"/>
        <end position="352"/>
    </location>
</feature>
<feature type="strand" evidence="5">
    <location>
        <begin position="354"/>
        <end position="356"/>
    </location>
</feature>
<feature type="strand" evidence="5">
    <location>
        <begin position="358"/>
        <end position="362"/>
    </location>
</feature>
<dbReference type="EC" id="3.5.2.3" evidence="4"/>
<dbReference type="EMBL" id="X07561">
    <property type="protein sequence ID" value="CAA30444.1"/>
    <property type="molecule type" value="Genomic_DNA"/>
</dbReference>
<dbReference type="EMBL" id="U20162">
    <property type="protein sequence ID" value="AAB67491.1"/>
    <property type="molecule type" value="Genomic_DNA"/>
</dbReference>
<dbReference type="EMBL" id="U20939">
    <property type="protein sequence ID" value="AAB67510.1"/>
    <property type="molecule type" value="Genomic_DNA"/>
</dbReference>
<dbReference type="EMBL" id="BK006945">
    <property type="protein sequence ID" value="DAA09722.1"/>
    <property type="molecule type" value="Genomic_DNA"/>
</dbReference>
<dbReference type="PIR" id="S59385">
    <property type="entry name" value="DEBYO"/>
</dbReference>
<dbReference type="RefSeq" id="NP_013524.1">
    <property type="nucleotide sequence ID" value="NM_001182308.1"/>
</dbReference>
<dbReference type="PDB" id="6L0A">
    <property type="method" value="X-ray"/>
    <property type="resolution" value="1.79 A"/>
    <property type="chains" value="A/B/C/D=1-364"/>
</dbReference>
<dbReference type="PDB" id="6L0B">
    <property type="method" value="X-ray"/>
    <property type="resolution" value="2.70 A"/>
    <property type="chains" value="A/B/C/D=1-364"/>
</dbReference>
<dbReference type="PDB" id="6L0F">
    <property type="method" value="X-ray"/>
    <property type="resolution" value="3.26 A"/>
    <property type="chains" value="A/B/C/D=1-364"/>
</dbReference>
<dbReference type="PDB" id="6L0G">
    <property type="method" value="X-ray"/>
    <property type="resolution" value="2.05 A"/>
    <property type="chains" value="A/B/C/D=1-364"/>
</dbReference>
<dbReference type="PDB" id="6L0H">
    <property type="method" value="X-ray"/>
    <property type="resolution" value="2.05 A"/>
    <property type="chains" value="A/B/C/D=1-364"/>
</dbReference>
<dbReference type="PDB" id="6L0I">
    <property type="method" value="X-ray"/>
    <property type="resolution" value="2.20 A"/>
    <property type="chains" value="A/B/C/D=1-364"/>
</dbReference>
<dbReference type="PDB" id="6L0J">
    <property type="method" value="X-ray"/>
    <property type="resolution" value="1.93 A"/>
    <property type="chains" value="A/B/C/D=1-364"/>
</dbReference>
<dbReference type="PDB" id="6L0K">
    <property type="method" value="X-ray"/>
    <property type="resolution" value="3.30 A"/>
    <property type="chains" value="A/B/C/D=1-364"/>
</dbReference>
<dbReference type="PDB" id="7CA0">
    <property type="method" value="X-ray"/>
    <property type="resolution" value="2.50 A"/>
    <property type="chains" value="A/B/C/D=1-364"/>
</dbReference>
<dbReference type="PDB" id="7CA1">
    <property type="method" value="X-ray"/>
    <property type="resolution" value="3.60 A"/>
    <property type="chains" value="A/B/C/D=1-364"/>
</dbReference>
<dbReference type="PDBsum" id="6L0A"/>
<dbReference type="PDBsum" id="6L0B"/>
<dbReference type="PDBsum" id="6L0F"/>
<dbReference type="PDBsum" id="6L0G"/>
<dbReference type="PDBsum" id="6L0H"/>
<dbReference type="PDBsum" id="6L0I"/>
<dbReference type="PDBsum" id="6L0J"/>
<dbReference type="PDBsum" id="6L0K"/>
<dbReference type="PDBsum" id="7CA0"/>
<dbReference type="PDBsum" id="7CA1"/>
<dbReference type="SMR" id="P20051"/>
<dbReference type="BioGRID" id="31679">
    <property type="interactions" value="152"/>
</dbReference>
<dbReference type="DIP" id="DIP-5074N"/>
<dbReference type="FunCoup" id="P20051">
    <property type="interactions" value="362"/>
</dbReference>
<dbReference type="IntAct" id="P20051">
    <property type="interactions" value="36"/>
</dbReference>
<dbReference type="MINT" id="P20051"/>
<dbReference type="STRING" id="4932.YLR420W"/>
<dbReference type="iPTMnet" id="P20051"/>
<dbReference type="PaxDb" id="4932-YLR420W"/>
<dbReference type="PeptideAtlas" id="P20051"/>
<dbReference type="EnsemblFungi" id="YLR420W_mRNA">
    <property type="protein sequence ID" value="YLR420W"/>
    <property type="gene ID" value="YLR420W"/>
</dbReference>
<dbReference type="GeneID" id="851139"/>
<dbReference type="KEGG" id="sce:YLR420W"/>
<dbReference type="AGR" id="SGD:S000004412"/>
<dbReference type="SGD" id="S000004412">
    <property type="gene designation" value="URA4"/>
</dbReference>
<dbReference type="VEuPathDB" id="FungiDB:YLR420W"/>
<dbReference type="eggNOG" id="KOG2902">
    <property type="taxonomic scope" value="Eukaryota"/>
</dbReference>
<dbReference type="GeneTree" id="ENSGT01030000234527"/>
<dbReference type="HOGENOM" id="CLU_041558_0_0_1"/>
<dbReference type="InParanoid" id="P20051"/>
<dbReference type="OMA" id="TLHHISM"/>
<dbReference type="OrthoDB" id="1670005at2759"/>
<dbReference type="BioCyc" id="MetaCyc:YLR420W-MONOMER"/>
<dbReference type="BioCyc" id="YEAST:YLR420W-MONOMER"/>
<dbReference type="BRENDA" id="3.5.2.3">
    <property type="organism ID" value="984"/>
</dbReference>
<dbReference type="UniPathway" id="UPA00070">
    <property type="reaction ID" value="UER00117"/>
</dbReference>
<dbReference type="BioGRID-ORCS" id="851139">
    <property type="hits" value="4 hits in 10 CRISPR screens"/>
</dbReference>
<dbReference type="PRO" id="PR:P20051"/>
<dbReference type="Proteomes" id="UP000002311">
    <property type="component" value="Chromosome XII"/>
</dbReference>
<dbReference type="RNAct" id="P20051">
    <property type="molecule type" value="protein"/>
</dbReference>
<dbReference type="GO" id="GO:0005737">
    <property type="term" value="C:cytoplasm"/>
    <property type="evidence" value="ECO:0007005"/>
    <property type="project" value="SGD"/>
</dbReference>
<dbReference type="GO" id="GO:0005634">
    <property type="term" value="C:nucleus"/>
    <property type="evidence" value="ECO:0007005"/>
    <property type="project" value="SGD"/>
</dbReference>
<dbReference type="GO" id="GO:0004151">
    <property type="term" value="F:dihydroorotase activity"/>
    <property type="evidence" value="ECO:0000315"/>
    <property type="project" value="SGD"/>
</dbReference>
<dbReference type="GO" id="GO:0046872">
    <property type="term" value="F:metal ion binding"/>
    <property type="evidence" value="ECO:0007669"/>
    <property type="project" value="UniProtKB-KW"/>
</dbReference>
<dbReference type="GO" id="GO:0006207">
    <property type="term" value="P:'de novo' pyrimidine nucleobase biosynthetic process"/>
    <property type="evidence" value="ECO:0000315"/>
    <property type="project" value="SGD"/>
</dbReference>
<dbReference type="GO" id="GO:0044205">
    <property type="term" value="P:'de novo' UMP biosynthetic process"/>
    <property type="evidence" value="ECO:0007669"/>
    <property type="project" value="UniProtKB-UniPathway"/>
</dbReference>
<dbReference type="GO" id="GO:0006221">
    <property type="term" value="P:pyrimidine nucleotide biosynthetic process"/>
    <property type="evidence" value="ECO:0000315"/>
    <property type="project" value="SGD"/>
</dbReference>
<dbReference type="CDD" id="cd01294">
    <property type="entry name" value="DHOase"/>
    <property type="match status" value="1"/>
</dbReference>
<dbReference type="FunFam" id="3.20.20.140:FF:000041">
    <property type="entry name" value="Dihydroorotase, variant"/>
    <property type="match status" value="1"/>
</dbReference>
<dbReference type="Gene3D" id="3.20.20.140">
    <property type="entry name" value="Metal-dependent hydrolases"/>
    <property type="match status" value="1"/>
</dbReference>
<dbReference type="HAMAP" id="MF_00219">
    <property type="entry name" value="PyrC_classII"/>
    <property type="match status" value="1"/>
</dbReference>
<dbReference type="InterPro" id="IPR006680">
    <property type="entry name" value="Amidohydro-rel"/>
</dbReference>
<dbReference type="InterPro" id="IPR004721">
    <property type="entry name" value="DHOdimr"/>
</dbReference>
<dbReference type="InterPro" id="IPR002195">
    <property type="entry name" value="Dihydroorotase_CS"/>
</dbReference>
<dbReference type="InterPro" id="IPR032466">
    <property type="entry name" value="Metal_Hydrolase"/>
</dbReference>
<dbReference type="NCBIfam" id="TIGR00856">
    <property type="entry name" value="pyrC_dimer"/>
    <property type="match status" value="1"/>
</dbReference>
<dbReference type="PANTHER" id="PTHR43137">
    <property type="entry name" value="DIHYDROOROTASE"/>
    <property type="match status" value="1"/>
</dbReference>
<dbReference type="PANTHER" id="PTHR43137:SF1">
    <property type="entry name" value="DIHYDROOROTASE"/>
    <property type="match status" value="1"/>
</dbReference>
<dbReference type="Pfam" id="PF04909">
    <property type="entry name" value="Amidohydro_2"/>
    <property type="match status" value="1"/>
</dbReference>
<dbReference type="PIRSF" id="PIRSF001237">
    <property type="entry name" value="DHOdimr"/>
    <property type="match status" value="1"/>
</dbReference>
<dbReference type="SUPFAM" id="SSF51556">
    <property type="entry name" value="Metallo-dependent hydrolases"/>
    <property type="match status" value="1"/>
</dbReference>
<dbReference type="PROSITE" id="PS00482">
    <property type="entry name" value="DIHYDROOROTASE_1"/>
    <property type="match status" value="1"/>
</dbReference>
<dbReference type="PROSITE" id="PS00483">
    <property type="entry name" value="DIHYDROOROTASE_2"/>
    <property type="match status" value="1"/>
</dbReference>
<protein>
    <recommendedName>
        <fullName>Dihydroorotase</fullName>
        <shortName>DHOase</shortName>
        <ecNumber evidence="4">3.5.2.3</ecNumber>
    </recommendedName>
</protein>
<accession>P20051</accession>
<accession>D6VZ56</accession>
<sequence length="364" mass="40313">MVQEIDLGLTCDMHVHVREGAMCELVTPKIRDGGVSIAYIMPNLQPPITTLDRVIEYKKTLQKLAPKTTFLMSFYLSKDLTPDLIHEAAQQHAIRGVKCYPAGVTTNSAAGVDPNDFSAFYPIFKAMQEENLVLNLHGEKPSVHDGDKEPIHVLNAEEAFLPALKKLHNDFPNLKIILEHCTSESAIKTIEDINKNVKKATDVKVAATLTAHHLFLTIDDWAGNPVNFCKPVAKLPNDKKALVKAAVSGKPYFFFGSDSAPHPVQNKANYEGVCAGVYSQSFAIPYIAQVFEEQNALENLKGFVSDFGISFYEVKDSEVASSDKAILFKKEQVIPQVISDGKDISIIPFKAGDKLSWSVRWEPR</sequence>
<keyword id="KW-0002">3D-structure</keyword>
<keyword id="KW-0378">Hydrolase</keyword>
<keyword id="KW-0479">Metal-binding</keyword>
<keyword id="KW-0665">Pyrimidine biosynthesis</keyword>
<keyword id="KW-1185">Reference proteome</keyword>
<keyword id="KW-0862">Zinc</keyword>
<proteinExistence type="evidence at protein level"/>
<comment type="function">
    <text evidence="4">Catalyzes the conversion of ureidosuccinic acid (USA) to dihydroorotate, the third step of the de novo pyrimidine biosynthetic pathway.</text>
</comment>
<comment type="catalytic activity">
    <reaction evidence="4">
        <text>(S)-dihydroorotate + H2O = N-carbamoyl-L-aspartate + H(+)</text>
        <dbReference type="Rhea" id="RHEA:24296"/>
        <dbReference type="ChEBI" id="CHEBI:15377"/>
        <dbReference type="ChEBI" id="CHEBI:15378"/>
        <dbReference type="ChEBI" id="CHEBI:30864"/>
        <dbReference type="ChEBI" id="CHEBI:32814"/>
        <dbReference type="EC" id="3.5.2.3"/>
    </reaction>
    <physiologicalReaction direction="right-to-left" evidence="4">
        <dbReference type="Rhea" id="RHEA:24298"/>
    </physiologicalReaction>
</comment>
<comment type="cofactor">
    <cofactor evidence="1">
        <name>Zn(2+)</name>
        <dbReference type="ChEBI" id="CHEBI:29105"/>
    </cofactor>
    <text evidence="1">Binds 2 Zn(2+) ions per subunit.</text>
</comment>
<comment type="pathway">
    <text evidence="4">Pyrimidine metabolism; UMP biosynthesis via de novo pathway; (S)-dihydroorotate from bicarbonate: step 3/3.</text>
</comment>
<comment type="induction">
    <text>By N-carbamoyl-L-aspartate.</text>
</comment>
<comment type="miscellaneous">
    <text evidence="2">Present with 12700 molecules/cell in log phase SD medium.</text>
</comment>
<comment type="similarity">
    <text evidence="3">Belongs to the metallo-dependent hydrolases superfamily. DHOase family. Class II DHOase subfamily.</text>
</comment>
<organism>
    <name type="scientific">Saccharomyces cerevisiae (strain ATCC 204508 / S288c)</name>
    <name type="common">Baker's yeast</name>
    <dbReference type="NCBI Taxonomy" id="559292"/>
    <lineage>
        <taxon>Eukaryota</taxon>
        <taxon>Fungi</taxon>
        <taxon>Dikarya</taxon>
        <taxon>Ascomycota</taxon>
        <taxon>Saccharomycotina</taxon>
        <taxon>Saccharomycetes</taxon>
        <taxon>Saccharomycetales</taxon>
        <taxon>Saccharomycetaceae</taxon>
        <taxon>Saccharomyces</taxon>
    </lineage>
</organism>
<gene>
    <name type="primary">URA4</name>
    <name type="ordered locus">YLR420W</name>
    <name type="ORF">L9931.1</name>
</gene>
<evidence type="ECO:0000250" key="1">
    <source>
        <dbReference type="UniProtKB" id="P05020"/>
    </source>
</evidence>
<evidence type="ECO:0000269" key="2">
    <source>
    </source>
</evidence>
<evidence type="ECO:0000305" key="3"/>
<evidence type="ECO:0000305" key="4">
    <source>
    </source>
</evidence>
<evidence type="ECO:0007829" key="5">
    <source>
        <dbReference type="PDB" id="6L0A"/>
    </source>
</evidence>
<evidence type="ECO:0007829" key="6">
    <source>
        <dbReference type="PDB" id="6L0B"/>
    </source>
</evidence>
<evidence type="ECO:0007829" key="7">
    <source>
        <dbReference type="PDB" id="6L0J"/>
    </source>
</evidence>
<reference key="1">
    <citation type="journal article" date="1988" name="Mol. Gen. Genet.">
        <title>Structure of the Saccharomyces cerevisiae URA4 gene encoding dihydroorotase.</title>
        <authorList>
            <person name="Guyonvarch A."/>
            <person name="Nguyen-Juilleret M."/>
            <person name="Hubert J.-C."/>
            <person name="Lacroute F."/>
        </authorList>
    </citation>
    <scope>NUCLEOTIDE SEQUENCE [GENOMIC DNA]</scope>
    <scope>FUNCTION</scope>
    <scope>CATALYTIC ACTIVITY</scope>
    <source>
        <strain>ATCC 28383 / FL100 / VTT C-80102</strain>
    </source>
</reference>
<reference key="2">
    <citation type="journal article" date="1997" name="Nature">
        <title>The nucleotide sequence of Saccharomyces cerevisiae chromosome XII.</title>
        <authorList>
            <person name="Johnston M."/>
            <person name="Hillier L.W."/>
            <person name="Riles L."/>
            <person name="Albermann K."/>
            <person name="Andre B."/>
            <person name="Ansorge W."/>
            <person name="Benes V."/>
            <person name="Brueckner M."/>
            <person name="Delius H."/>
            <person name="Dubois E."/>
            <person name="Duesterhoeft A."/>
            <person name="Entian K.-D."/>
            <person name="Floeth M."/>
            <person name="Goffeau A."/>
            <person name="Hebling U."/>
            <person name="Heumann K."/>
            <person name="Heuss-Neitzel D."/>
            <person name="Hilbert H."/>
            <person name="Hilger F."/>
            <person name="Kleine K."/>
            <person name="Koetter P."/>
            <person name="Louis E.J."/>
            <person name="Messenguy F."/>
            <person name="Mewes H.-W."/>
            <person name="Miosga T."/>
            <person name="Moestl D."/>
            <person name="Mueller-Auer S."/>
            <person name="Nentwich U."/>
            <person name="Obermaier B."/>
            <person name="Piravandi E."/>
            <person name="Pohl T.M."/>
            <person name="Portetelle D."/>
            <person name="Purnelle B."/>
            <person name="Rechmann S."/>
            <person name="Rieger M."/>
            <person name="Rinke M."/>
            <person name="Rose M."/>
            <person name="Scharfe M."/>
            <person name="Scherens B."/>
            <person name="Scholler P."/>
            <person name="Schwager C."/>
            <person name="Schwarz S."/>
            <person name="Underwood A.P."/>
            <person name="Urrestarazu L.A."/>
            <person name="Vandenbol M."/>
            <person name="Verhasselt P."/>
            <person name="Vierendeels F."/>
            <person name="Voet M."/>
            <person name="Volckaert G."/>
            <person name="Voss H."/>
            <person name="Wambutt R."/>
            <person name="Wedler E."/>
            <person name="Wedler H."/>
            <person name="Zimmermann F.K."/>
            <person name="Zollner A."/>
            <person name="Hani J."/>
            <person name="Hoheisel J.D."/>
        </authorList>
    </citation>
    <scope>NUCLEOTIDE SEQUENCE [LARGE SCALE GENOMIC DNA]</scope>
    <source>
        <strain>ATCC 204508 / S288c</strain>
    </source>
</reference>
<reference key="3">
    <citation type="journal article" date="2014" name="G3 (Bethesda)">
        <title>The reference genome sequence of Saccharomyces cerevisiae: Then and now.</title>
        <authorList>
            <person name="Engel S.R."/>
            <person name="Dietrich F.S."/>
            <person name="Fisk D.G."/>
            <person name="Binkley G."/>
            <person name="Balakrishnan R."/>
            <person name="Costanzo M.C."/>
            <person name="Dwight S.S."/>
            <person name="Hitz B.C."/>
            <person name="Karra K."/>
            <person name="Nash R.S."/>
            <person name="Weng S."/>
            <person name="Wong E.D."/>
            <person name="Lloyd P."/>
            <person name="Skrzypek M.S."/>
            <person name="Miyasato S.R."/>
            <person name="Simison M."/>
            <person name="Cherry J.M."/>
        </authorList>
    </citation>
    <scope>GENOME REANNOTATION</scope>
    <source>
        <strain>ATCC 204508 / S288c</strain>
    </source>
</reference>
<reference key="4">
    <citation type="journal article" date="2003" name="Nature">
        <title>Global analysis of protein expression in yeast.</title>
        <authorList>
            <person name="Ghaemmaghami S."/>
            <person name="Huh W.-K."/>
            <person name="Bower K."/>
            <person name="Howson R.W."/>
            <person name="Belle A."/>
            <person name="Dephoure N."/>
            <person name="O'Shea E.K."/>
            <person name="Weissman J.S."/>
        </authorList>
    </citation>
    <scope>LEVEL OF PROTEIN EXPRESSION [LARGE SCALE ANALYSIS]</scope>
</reference>
<name>PYRC_YEAST</name>